<keyword id="KW-0004">4Fe-4S</keyword>
<keyword id="KW-0408">Iron</keyword>
<keyword id="KW-0411">Iron-sulfur</keyword>
<keyword id="KW-0456">Lyase</keyword>
<keyword id="KW-0479">Metal-binding</keyword>
<keyword id="KW-0949">S-adenosyl-L-methionine</keyword>
<keyword id="KW-0784">Thiamine biosynthesis</keyword>
<keyword id="KW-0862">Zinc</keyword>
<dbReference type="EC" id="4.1.99.17" evidence="1"/>
<dbReference type="EMBL" id="CP001172">
    <property type="protein sequence ID" value="ACJ57810.1"/>
    <property type="molecule type" value="Genomic_DNA"/>
</dbReference>
<dbReference type="RefSeq" id="WP_001072861.1">
    <property type="nucleotide sequence ID" value="NZ_CP001172.1"/>
</dbReference>
<dbReference type="SMR" id="B7H1M6"/>
<dbReference type="GeneID" id="92892250"/>
<dbReference type="HOGENOM" id="CLU_013181_2_1_6"/>
<dbReference type="UniPathway" id="UPA00060"/>
<dbReference type="Proteomes" id="UP000006924">
    <property type="component" value="Chromosome"/>
</dbReference>
<dbReference type="GO" id="GO:0005829">
    <property type="term" value="C:cytosol"/>
    <property type="evidence" value="ECO:0007669"/>
    <property type="project" value="TreeGrafter"/>
</dbReference>
<dbReference type="GO" id="GO:0051539">
    <property type="term" value="F:4 iron, 4 sulfur cluster binding"/>
    <property type="evidence" value="ECO:0007669"/>
    <property type="project" value="UniProtKB-KW"/>
</dbReference>
<dbReference type="GO" id="GO:0016830">
    <property type="term" value="F:carbon-carbon lyase activity"/>
    <property type="evidence" value="ECO:0007669"/>
    <property type="project" value="InterPro"/>
</dbReference>
<dbReference type="GO" id="GO:0008270">
    <property type="term" value="F:zinc ion binding"/>
    <property type="evidence" value="ECO:0007669"/>
    <property type="project" value="UniProtKB-UniRule"/>
</dbReference>
<dbReference type="GO" id="GO:0009228">
    <property type="term" value="P:thiamine biosynthetic process"/>
    <property type="evidence" value="ECO:0007669"/>
    <property type="project" value="UniProtKB-KW"/>
</dbReference>
<dbReference type="GO" id="GO:0009229">
    <property type="term" value="P:thiamine diphosphate biosynthetic process"/>
    <property type="evidence" value="ECO:0007669"/>
    <property type="project" value="UniProtKB-UniRule"/>
</dbReference>
<dbReference type="FunFam" id="3.20.20.540:FF:000001">
    <property type="entry name" value="Phosphomethylpyrimidine synthase"/>
    <property type="match status" value="1"/>
</dbReference>
<dbReference type="Gene3D" id="6.10.250.620">
    <property type="match status" value="1"/>
</dbReference>
<dbReference type="Gene3D" id="3.20.20.540">
    <property type="entry name" value="Radical SAM ThiC family, central domain"/>
    <property type="match status" value="1"/>
</dbReference>
<dbReference type="HAMAP" id="MF_00089">
    <property type="entry name" value="ThiC"/>
    <property type="match status" value="1"/>
</dbReference>
<dbReference type="InterPro" id="IPR037509">
    <property type="entry name" value="ThiC"/>
</dbReference>
<dbReference type="InterPro" id="IPR025747">
    <property type="entry name" value="ThiC-associated_dom"/>
</dbReference>
<dbReference type="InterPro" id="IPR038521">
    <property type="entry name" value="ThiC/Bza_core_dom"/>
</dbReference>
<dbReference type="InterPro" id="IPR002817">
    <property type="entry name" value="ThiC/BzaA/B"/>
</dbReference>
<dbReference type="NCBIfam" id="NF006763">
    <property type="entry name" value="PRK09284.1"/>
    <property type="match status" value="1"/>
</dbReference>
<dbReference type="NCBIfam" id="NF009895">
    <property type="entry name" value="PRK13352.1"/>
    <property type="match status" value="1"/>
</dbReference>
<dbReference type="NCBIfam" id="TIGR00190">
    <property type="entry name" value="thiC"/>
    <property type="match status" value="1"/>
</dbReference>
<dbReference type="PANTHER" id="PTHR30557:SF1">
    <property type="entry name" value="PHOSPHOMETHYLPYRIMIDINE SYNTHASE, CHLOROPLASTIC"/>
    <property type="match status" value="1"/>
</dbReference>
<dbReference type="PANTHER" id="PTHR30557">
    <property type="entry name" value="THIAMINE BIOSYNTHESIS PROTEIN THIC"/>
    <property type="match status" value="1"/>
</dbReference>
<dbReference type="Pfam" id="PF13667">
    <property type="entry name" value="ThiC-associated"/>
    <property type="match status" value="1"/>
</dbReference>
<dbReference type="Pfam" id="PF01964">
    <property type="entry name" value="ThiC_Rad_SAM"/>
    <property type="match status" value="1"/>
</dbReference>
<dbReference type="SFLD" id="SFLDF00407">
    <property type="entry name" value="phosphomethylpyrimidine_syntha"/>
    <property type="match status" value="1"/>
</dbReference>
<dbReference type="SFLD" id="SFLDG01114">
    <property type="entry name" value="phosphomethylpyrimidine_syntha"/>
    <property type="match status" value="1"/>
</dbReference>
<dbReference type="SFLD" id="SFLDS00113">
    <property type="entry name" value="Radical_SAM_Phosphomethylpyrim"/>
    <property type="match status" value="1"/>
</dbReference>
<proteinExistence type="inferred from homology"/>
<protein>
    <recommendedName>
        <fullName evidence="1">Phosphomethylpyrimidine synthase</fullName>
        <ecNumber evidence="1">4.1.99.17</ecNumber>
    </recommendedName>
    <alternativeName>
        <fullName evidence="1">Hydroxymethylpyrimidine phosphate synthase</fullName>
        <shortName evidence="1">HMP-P synthase</shortName>
        <shortName evidence="1">HMP-phosphate synthase</shortName>
        <shortName evidence="1">HMPP synthase</shortName>
    </alternativeName>
    <alternativeName>
        <fullName evidence="1">Thiamine biosynthesis protein ThiC</fullName>
    </alternativeName>
</protein>
<accession>B7H1M6</accession>
<reference key="1">
    <citation type="journal article" date="2008" name="J. Bacteriol.">
        <title>Comparative genome sequence analysis of multidrug-resistant Acinetobacter baumannii.</title>
        <authorList>
            <person name="Adams M.D."/>
            <person name="Goglin K."/>
            <person name="Molyneaux N."/>
            <person name="Hujer K.M."/>
            <person name="Lavender H."/>
            <person name="Jamison J.J."/>
            <person name="MacDonald I.J."/>
            <person name="Martin K.M."/>
            <person name="Russo T."/>
            <person name="Campagnari A.A."/>
            <person name="Hujer A.M."/>
            <person name="Bonomo R.A."/>
            <person name="Gill S.R."/>
        </authorList>
    </citation>
    <scope>NUCLEOTIDE SEQUENCE [LARGE SCALE GENOMIC DNA]</scope>
    <source>
        <strain>AB307-0294</strain>
    </source>
</reference>
<organism>
    <name type="scientific">Acinetobacter baumannii (strain AB307-0294)</name>
    <dbReference type="NCBI Taxonomy" id="557600"/>
    <lineage>
        <taxon>Bacteria</taxon>
        <taxon>Pseudomonadati</taxon>
        <taxon>Pseudomonadota</taxon>
        <taxon>Gammaproteobacteria</taxon>
        <taxon>Moraxellales</taxon>
        <taxon>Moraxellaceae</taxon>
        <taxon>Acinetobacter</taxon>
        <taxon>Acinetobacter calcoaceticus/baumannii complex</taxon>
    </lineage>
</organism>
<feature type="chain" id="PRO_1000198041" description="Phosphomethylpyrimidine synthase">
    <location>
        <begin position="1"/>
        <end position="625"/>
    </location>
</feature>
<feature type="binding site" evidence="1">
    <location>
        <position position="231"/>
    </location>
    <ligand>
        <name>substrate</name>
    </ligand>
</feature>
<feature type="binding site" evidence="1">
    <location>
        <position position="260"/>
    </location>
    <ligand>
        <name>substrate</name>
    </ligand>
</feature>
<feature type="binding site" evidence="1">
    <location>
        <position position="289"/>
    </location>
    <ligand>
        <name>substrate</name>
    </ligand>
</feature>
<feature type="binding site" evidence="1">
    <location>
        <position position="325"/>
    </location>
    <ligand>
        <name>substrate</name>
    </ligand>
</feature>
<feature type="binding site" evidence="1">
    <location>
        <begin position="345"/>
        <end position="347"/>
    </location>
    <ligand>
        <name>substrate</name>
    </ligand>
</feature>
<feature type="binding site" evidence="1">
    <location>
        <begin position="386"/>
        <end position="389"/>
    </location>
    <ligand>
        <name>substrate</name>
    </ligand>
</feature>
<feature type="binding site" evidence="1">
    <location>
        <position position="425"/>
    </location>
    <ligand>
        <name>substrate</name>
    </ligand>
</feature>
<feature type="binding site" evidence="1">
    <location>
        <position position="429"/>
    </location>
    <ligand>
        <name>Zn(2+)</name>
        <dbReference type="ChEBI" id="CHEBI:29105"/>
    </ligand>
</feature>
<feature type="binding site" evidence="1">
    <location>
        <position position="452"/>
    </location>
    <ligand>
        <name>substrate</name>
    </ligand>
</feature>
<feature type="binding site" evidence="1">
    <location>
        <position position="493"/>
    </location>
    <ligand>
        <name>Zn(2+)</name>
        <dbReference type="ChEBI" id="CHEBI:29105"/>
    </ligand>
</feature>
<feature type="binding site" evidence="1">
    <location>
        <position position="573"/>
    </location>
    <ligand>
        <name>[4Fe-4S] cluster</name>
        <dbReference type="ChEBI" id="CHEBI:49883"/>
        <note>4Fe-4S-S-AdoMet</note>
    </ligand>
</feature>
<feature type="binding site" evidence="1">
    <location>
        <position position="576"/>
    </location>
    <ligand>
        <name>[4Fe-4S] cluster</name>
        <dbReference type="ChEBI" id="CHEBI:49883"/>
        <note>4Fe-4S-S-AdoMet</note>
    </ligand>
</feature>
<feature type="binding site" evidence="1">
    <location>
        <position position="581"/>
    </location>
    <ligand>
        <name>[4Fe-4S] cluster</name>
        <dbReference type="ChEBI" id="CHEBI:49883"/>
        <note>4Fe-4S-S-AdoMet</note>
    </ligand>
</feature>
<name>THIC_ACIB3</name>
<sequence>MNQLTNLSSAEISAQHEQDAKDLTRILPASKKVYIEGSRPDIQVPMREISLTDTPTGLGGEHNPPIMVYDTSGVYTDPNVQIDLNKGLPSVRQKWIEERNDTDVLSGLTSKFGQERLKDIRTADIRFAHIQNPRRAKAGKNVTQMHYAKQGIITPEMEYIAIRENQRQREAVDMRQHPGQNFGAKNLKEITPEFVRQEVAEGRAIIPANINHPELEPMIIGRNFLVKINANIGNSALGSSIDEEVAKMTWATRWGADTIMDLSTGKNIHETREWIIRNSPVPIGTVPIYQALEKVDGVAENLTWEIFKDTLIEQAEQGVDYFTIHAGVLLRYVPLTANRLTGIVSRGGSIMAQWCLAHHEENFLYTHFDEICEIMKAYDVSFSLGDGLRPGCIQDANDEAQFSELKTLGELTHRAWEHDVQVMIEGPGHVPMHMIKENMDLQLEVCKEAPFYTLGPLTTDIAPGYDHITSAIGAAMIGWYGTAMLCYVTPKEHLGLPNKKDVKDGIITYKIAAHAADLAKGHPGAQVRDNALSKARFEFRWDDQFNLSLDPDTARSMHDETLPKEAHKSAHFCSMCGPKFCSMKITQNVRDYANNLTNSDSEVEEGLKAMKEVYQEQGQKLYHKV</sequence>
<comment type="function">
    <text evidence="1">Catalyzes the synthesis of the hydroxymethylpyrimidine phosphate (HMP-P) moiety of thiamine from aminoimidazole ribotide (AIR) in a radical S-adenosyl-L-methionine (SAM)-dependent reaction.</text>
</comment>
<comment type="catalytic activity">
    <reaction evidence="1">
        <text>5-amino-1-(5-phospho-beta-D-ribosyl)imidazole + S-adenosyl-L-methionine = 4-amino-2-methyl-5-(phosphooxymethyl)pyrimidine + CO + 5'-deoxyadenosine + formate + L-methionine + 3 H(+)</text>
        <dbReference type="Rhea" id="RHEA:24840"/>
        <dbReference type="ChEBI" id="CHEBI:15378"/>
        <dbReference type="ChEBI" id="CHEBI:15740"/>
        <dbReference type="ChEBI" id="CHEBI:17245"/>
        <dbReference type="ChEBI" id="CHEBI:17319"/>
        <dbReference type="ChEBI" id="CHEBI:57844"/>
        <dbReference type="ChEBI" id="CHEBI:58354"/>
        <dbReference type="ChEBI" id="CHEBI:59789"/>
        <dbReference type="ChEBI" id="CHEBI:137981"/>
        <dbReference type="EC" id="4.1.99.17"/>
    </reaction>
</comment>
<comment type="cofactor">
    <cofactor evidence="1">
        <name>[4Fe-4S] cluster</name>
        <dbReference type="ChEBI" id="CHEBI:49883"/>
    </cofactor>
    <text evidence="1">Binds 1 [4Fe-4S] cluster per subunit. The cluster is coordinated with 3 cysteines and an exchangeable S-adenosyl-L-methionine.</text>
</comment>
<comment type="pathway">
    <text evidence="1">Cofactor biosynthesis; thiamine diphosphate biosynthesis.</text>
</comment>
<comment type="subunit">
    <text evidence="1">Homodimer.</text>
</comment>
<comment type="similarity">
    <text evidence="1">Belongs to the ThiC family.</text>
</comment>
<evidence type="ECO:0000255" key="1">
    <source>
        <dbReference type="HAMAP-Rule" id="MF_00089"/>
    </source>
</evidence>
<gene>
    <name evidence="1" type="primary">thiC</name>
    <name type="ordered locus">ABBFA_003281</name>
</gene>